<sequence length="135" mass="15171">VHFSSSVMVLLFGLPFLVTLVCYGLMALRLCRPLPGAGQSSSRLRSLRTIAVVMTVFAVCLVPFHITRTIYYLARLLKADCQILNIVNVVYKVTRPLASANSCLDPLLYLFTGDKYRHQLQRLCRVSAPQRRITA</sequence>
<proteinExistence type="evidence at transcript level"/>
<name>P2RY4_MERUN</name>
<evidence type="ECO:0000255" key="1"/>
<evidence type="ECO:0000255" key="2">
    <source>
        <dbReference type="PROSITE-ProRule" id="PRU00521"/>
    </source>
</evidence>
<feature type="chain" id="PRO_0000070021" description="P2Y purinoceptor 4">
    <location>
        <begin position="1" status="less than"/>
        <end position="135" status="greater than"/>
    </location>
</feature>
<feature type="transmembrane region" description="Helical; Name=5" evidence="1">
    <location>
        <begin position="1" status="less than"/>
        <end position="25"/>
    </location>
</feature>
<feature type="topological domain" description="Cytoplasmic" evidence="1">
    <location>
        <begin position="26"/>
        <end position="49"/>
    </location>
</feature>
<feature type="transmembrane region" description="Helical; Name=6" evidence="1">
    <location>
        <begin position="50"/>
        <end position="72"/>
    </location>
</feature>
<feature type="topological domain" description="Extracellular" evidence="1">
    <location>
        <begin position="73"/>
        <end position="90"/>
    </location>
</feature>
<feature type="transmembrane region" description="Helical; Name=7" evidence="1">
    <location>
        <begin position="91"/>
        <end position="112"/>
    </location>
</feature>
<feature type="topological domain" description="Cytoplasmic" evidence="1">
    <location>
        <begin position="113"/>
        <end position="135" status="greater than"/>
    </location>
</feature>
<feature type="non-terminal residue">
    <location>
        <position position="1"/>
    </location>
</feature>
<feature type="non-terminal residue">
    <location>
        <position position="135"/>
    </location>
</feature>
<protein>
    <recommendedName>
        <fullName>P2Y purinoceptor 4</fullName>
        <shortName>P2Y4</shortName>
    </recommendedName>
</protein>
<keyword id="KW-1003">Cell membrane</keyword>
<keyword id="KW-0297">G-protein coupled receptor</keyword>
<keyword id="KW-0472">Membrane</keyword>
<keyword id="KW-0675">Receptor</keyword>
<keyword id="KW-0807">Transducer</keyword>
<keyword id="KW-0812">Transmembrane</keyword>
<keyword id="KW-1133">Transmembrane helix</keyword>
<comment type="function">
    <text>Receptor for ATP and UTP coupled to G-proteins that activate a phosphatidylinositol-calcium second messenger system. Not activated by UDP.</text>
</comment>
<comment type="subcellular location">
    <subcellularLocation>
        <location>Cell membrane</location>
        <topology>Multi-pass membrane protein</topology>
    </subcellularLocation>
</comment>
<comment type="tissue specificity">
    <text>Expressed in brain, heart, stria vascularis and vestibular labyrinth.</text>
</comment>
<comment type="similarity">
    <text evidence="2">Belongs to the G-protein coupled receptor 1 family.</text>
</comment>
<accession>Q99PE4</accession>
<gene>
    <name type="primary">P2RY4</name>
</gene>
<dbReference type="EMBL" id="AF313447">
    <property type="protein sequence ID" value="AAK07560.1"/>
    <property type="molecule type" value="mRNA"/>
</dbReference>
<dbReference type="SMR" id="Q99PE4"/>
<dbReference type="GO" id="GO:0005886">
    <property type="term" value="C:plasma membrane"/>
    <property type="evidence" value="ECO:0007669"/>
    <property type="project" value="UniProtKB-SubCell"/>
</dbReference>
<dbReference type="GO" id="GO:0045028">
    <property type="term" value="F:G protein-coupled purinergic nucleotide receptor activity"/>
    <property type="evidence" value="ECO:0007669"/>
    <property type="project" value="InterPro"/>
</dbReference>
<dbReference type="GO" id="GO:0045030">
    <property type="term" value="F:G protein-coupled UTP receptor activity"/>
    <property type="evidence" value="ECO:0007669"/>
    <property type="project" value="TreeGrafter"/>
</dbReference>
<dbReference type="GO" id="GO:0030321">
    <property type="term" value="P:transepithelial chloride transport"/>
    <property type="evidence" value="ECO:0007669"/>
    <property type="project" value="InterPro"/>
</dbReference>
<dbReference type="Gene3D" id="1.20.1070.10">
    <property type="entry name" value="Rhodopsin 7-helix transmembrane proteins"/>
    <property type="match status" value="1"/>
</dbReference>
<dbReference type="InterPro" id="IPR000276">
    <property type="entry name" value="GPCR_Rhodpsn"/>
</dbReference>
<dbReference type="InterPro" id="IPR017452">
    <property type="entry name" value="GPCR_Rhodpsn_7TM"/>
</dbReference>
<dbReference type="InterPro" id="IPR000018">
    <property type="entry name" value="P2Y4"/>
</dbReference>
<dbReference type="PANTHER" id="PTHR24231:SF21">
    <property type="entry name" value="P2Y PURINOCEPTOR 4"/>
    <property type="match status" value="1"/>
</dbReference>
<dbReference type="PANTHER" id="PTHR24231">
    <property type="entry name" value="PURINOCEPTOR-RELATED G-PROTEIN COUPLED RECEPTOR"/>
    <property type="match status" value="1"/>
</dbReference>
<dbReference type="Pfam" id="PF00001">
    <property type="entry name" value="7tm_1"/>
    <property type="match status" value="1"/>
</dbReference>
<dbReference type="PRINTS" id="PR00237">
    <property type="entry name" value="GPCRRHODOPSN"/>
</dbReference>
<dbReference type="PRINTS" id="PR01066">
    <property type="entry name" value="P2Y4PRNOCPTR"/>
</dbReference>
<dbReference type="PRINTS" id="PR01157">
    <property type="entry name" value="P2YPURNOCPTR"/>
</dbReference>
<dbReference type="SUPFAM" id="SSF81321">
    <property type="entry name" value="Family A G protein-coupled receptor-like"/>
    <property type="match status" value="1"/>
</dbReference>
<dbReference type="PROSITE" id="PS50262">
    <property type="entry name" value="G_PROTEIN_RECEP_F1_2"/>
    <property type="match status" value="1"/>
</dbReference>
<organism>
    <name type="scientific">Meriones unguiculatus</name>
    <name type="common">Mongolian jird</name>
    <name type="synonym">Gerbillus unguiculatus</name>
    <dbReference type="NCBI Taxonomy" id="10047"/>
    <lineage>
        <taxon>Eukaryota</taxon>
        <taxon>Metazoa</taxon>
        <taxon>Chordata</taxon>
        <taxon>Craniata</taxon>
        <taxon>Vertebrata</taxon>
        <taxon>Euteleostomi</taxon>
        <taxon>Mammalia</taxon>
        <taxon>Eutheria</taxon>
        <taxon>Euarchontoglires</taxon>
        <taxon>Glires</taxon>
        <taxon>Rodentia</taxon>
        <taxon>Myomorpha</taxon>
        <taxon>Muroidea</taxon>
        <taxon>Muridae</taxon>
        <taxon>Gerbillinae</taxon>
        <taxon>Meriones</taxon>
    </lineage>
</organism>
<reference key="1">
    <citation type="journal article" date="2001" name="Am. J. Physiol.">
        <title>Apical P2Y4 purinergic receptor controls K+ secretion by vestibular dark cell epithelium.</title>
        <authorList>
            <person name="Marcus D.C."/>
            <person name="Scofield M.A."/>
        </authorList>
    </citation>
    <scope>NUCLEOTIDE SEQUENCE [MRNA]</scope>
    <source>
        <tissue>Inner ear</tissue>
    </source>
</reference>